<dbReference type="EMBL" id="BX648524">
    <property type="status" value="NOT_ANNOTATED_CDS"/>
    <property type="molecule type" value="mRNA"/>
</dbReference>
<dbReference type="EMBL" id="AC022389">
    <property type="status" value="NOT_ANNOTATED_CDS"/>
    <property type="molecule type" value="Genomic_DNA"/>
</dbReference>
<dbReference type="EMBL" id="BC140765">
    <property type="protein sequence ID" value="AAI40766.1"/>
    <property type="molecule type" value="mRNA"/>
</dbReference>
<dbReference type="EMBL" id="BC144475">
    <property type="protein sequence ID" value="AAI44476.1"/>
    <property type="molecule type" value="mRNA"/>
</dbReference>
<dbReference type="CCDS" id="CCDS31234.1">
    <molecule id="A6NDA9-1"/>
</dbReference>
<dbReference type="CCDS" id="CCDS60581.1">
    <molecule id="A6NDA9-2"/>
</dbReference>
<dbReference type="RefSeq" id="NP_001017924.1">
    <molecule id="A6NDA9-1"/>
    <property type="nucleotide sequence ID" value="NM_001017924.5"/>
</dbReference>
<dbReference type="RefSeq" id="NP_001271152.1">
    <molecule id="A6NDA9-2"/>
    <property type="nucleotide sequence ID" value="NM_001284223.1"/>
</dbReference>
<dbReference type="SMR" id="A6NDA9"/>
<dbReference type="STRING" id="9606.ENSP00000438264"/>
<dbReference type="GlyCosmos" id="A6NDA9">
    <property type="glycosylation" value="1 site, No reported glycans"/>
</dbReference>
<dbReference type="GlyGen" id="A6NDA9">
    <property type="glycosylation" value="1 site"/>
</dbReference>
<dbReference type="iPTMnet" id="A6NDA9"/>
<dbReference type="PhosphoSitePlus" id="A6NDA9"/>
<dbReference type="BioMuta" id="LRIT2"/>
<dbReference type="MassIVE" id="A6NDA9"/>
<dbReference type="PaxDb" id="9606-ENSP00000438264"/>
<dbReference type="PeptideAtlas" id="A6NDA9"/>
<dbReference type="ProteomicsDB" id="7256"/>
<dbReference type="ProteomicsDB" id="897">
    <molecule id="A6NDA9-1"/>
</dbReference>
<dbReference type="Antibodypedia" id="48881">
    <property type="antibodies" value="7 antibodies from 6 providers"/>
</dbReference>
<dbReference type="DNASU" id="340745"/>
<dbReference type="Ensembl" id="ENST00000372113.7">
    <molecule id="A6NDA9-1"/>
    <property type="protein sequence ID" value="ENSP00000361185.3"/>
    <property type="gene ID" value="ENSG00000204033.10"/>
</dbReference>
<dbReference type="Ensembl" id="ENST00000538192.5">
    <molecule id="A6NDA9-2"/>
    <property type="protein sequence ID" value="ENSP00000438264.1"/>
    <property type="gene ID" value="ENSG00000204033.10"/>
</dbReference>
<dbReference type="GeneID" id="340745"/>
<dbReference type="KEGG" id="hsa:340745"/>
<dbReference type="MANE-Select" id="ENST00000372113.7">
    <property type="protein sequence ID" value="ENSP00000361185.3"/>
    <property type="RefSeq nucleotide sequence ID" value="NM_001017924.5"/>
    <property type="RefSeq protein sequence ID" value="NP_001017924.1"/>
</dbReference>
<dbReference type="UCSC" id="uc001kcy.5">
    <molecule id="A6NDA9-1"/>
    <property type="organism name" value="human"/>
</dbReference>
<dbReference type="AGR" id="HGNC:23443"/>
<dbReference type="CTD" id="340745"/>
<dbReference type="DisGeNET" id="340745"/>
<dbReference type="GeneCards" id="LRIT2"/>
<dbReference type="HGNC" id="HGNC:23443">
    <property type="gene designation" value="LRIT2"/>
</dbReference>
<dbReference type="HPA" id="ENSG00000204033">
    <property type="expression patterns" value="Tissue enriched (retina)"/>
</dbReference>
<dbReference type="neXtProt" id="NX_A6NDA9"/>
<dbReference type="OpenTargets" id="ENSG00000204033"/>
<dbReference type="PharmGKB" id="PA162394344"/>
<dbReference type="VEuPathDB" id="HostDB:ENSG00000204033"/>
<dbReference type="eggNOG" id="KOG0619">
    <property type="taxonomic scope" value="Eukaryota"/>
</dbReference>
<dbReference type="GeneTree" id="ENSGT00940000159143"/>
<dbReference type="HOGENOM" id="CLU_034556_1_0_1"/>
<dbReference type="InParanoid" id="A6NDA9"/>
<dbReference type="OMA" id="GITLEWH"/>
<dbReference type="OrthoDB" id="1099686at2759"/>
<dbReference type="PAN-GO" id="A6NDA9">
    <property type="GO annotations" value="0 GO annotations based on evolutionary models"/>
</dbReference>
<dbReference type="PhylomeDB" id="A6NDA9"/>
<dbReference type="TreeFam" id="TF330861"/>
<dbReference type="PathwayCommons" id="A6NDA9"/>
<dbReference type="BioGRID-ORCS" id="340745">
    <property type="hits" value="13 hits in 1135 CRISPR screens"/>
</dbReference>
<dbReference type="GenomeRNAi" id="340745"/>
<dbReference type="Pharos" id="A6NDA9">
    <property type="development level" value="Tdark"/>
</dbReference>
<dbReference type="PRO" id="PR:A6NDA9"/>
<dbReference type="Proteomes" id="UP000005640">
    <property type="component" value="Chromosome 10"/>
</dbReference>
<dbReference type="RNAct" id="A6NDA9">
    <property type="molecule type" value="protein"/>
</dbReference>
<dbReference type="Bgee" id="ENSG00000204033">
    <property type="expression patterns" value="Expressed in mucosa of transverse colon and 40 other cell types or tissues"/>
</dbReference>
<dbReference type="GO" id="GO:0016020">
    <property type="term" value="C:membrane"/>
    <property type="evidence" value="ECO:0007669"/>
    <property type="project" value="UniProtKB-SubCell"/>
</dbReference>
<dbReference type="CDD" id="cd00063">
    <property type="entry name" value="FN3"/>
    <property type="match status" value="1"/>
</dbReference>
<dbReference type="FunFam" id="2.60.40.10:FF:000032">
    <property type="entry name" value="palladin isoform X1"/>
    <property type="match status" value="1"/>
</dbReference>
<dbReference type="Gene3D" id="2.60.40.10">
    <property type="entry name" value="Immunoglobulins"/>
    <property type="match status" value="1"/>
</dbReference>
<dbReference type="Gene3D" id="3.80.10.10">
    <property type="entry name" value="Ribonuclease Inhibitor"/>
    <property type="match status" value="1"/>
</dbReference>
<dbReference type="InterPro" id="IPR000483">
    <property type="entry name" value="Cys-rich_flank_reg_C"/>
</dbReference>
<dbReference type="InterPro" id="IPR003961">
    <property type="entry name" value="FN3_dom"/>
</dbReference>
<dbReference type="InterPro" id="IPR007110">
    <property type="entry name" value="Ig-like_dom"/>
</dbReference>
<dbReference type="InterPro" id="IPR036179">
    <property type="entry name" value="Ig-like_dom_sf"/>
</dbReference>
<dbReference type="InterPro" id="IPR013783">
    <property type="entry name" value="Ig-like_fold"/>
</dbReference>
<dbReference type="InterPro" id="IPR003599">
    <property type="entry name" value="Ig_sub"/>
</dbReference>
<dbReference type="InterPro" id="IPR003598">
    <property type="entry name" value="Ig_sub2"/>
</dbReference>
<dbReference type="InterPro" id="IPR001611">
    <property type="entry name" value="Leu-rich_rpt"/>
</dbReference>
<dbReference type="InterPro" id="IPR003591">
    <property type="entry name" value="Leu-rich_rpt_typical-subtyp"/>
</dbReference>
<dbReference type="InterPro" id="IPR050467">
    <property type="entry name" value="LRFN"/>
</dbReference>
<dbReference type="InterPro" id="IPR032675">
    <property type="entry name" value="LRR_dom_sf"/>
</dbReference>
<dbReference type="InterPro" id="IPR020901">
    <property type="entry name" value="Prtase_inh_Kunz-CS"/>
</dbReference>
<dbReference type="PANTHER" id="PTHR45842:SF14">
    <property type="entry name" value="LEUCINE-RICH REPEAT, IMMUNOGLOBULIN-LIKE DOMAIN AND TRANSMEMBRANE DOMAIN-CONTAINING PROTEIN 2"/>
    <property type="match status" value="1"/>
</dbReference>
<dbReference type="PANTHER" id="PTHR45842">
    <property type="entry name" value="SYNAPTIC ADHESION-LIKE MOLECULE SALM"/>
    <property type="match status" value="1"/>
</dbReference>
<dbReference type="Pfam" id="PF13927">
    <property type="entry name" value="Ig_3"/>
    <property type="match status" value="1"/>
</dbReference>
<dbReference type="Pfam" id="PF00560">
    <property type="entry name" value="LRR_1"/>
    <property type="match status" value="1"/>
</dbReference>
<dbReference type="Pfam" id="PF13855">
    <property type="entry name" value="LRR_8"/>
    <property type="match status" value="1"/>
</dbReference>
<dbReference type="SMART" id="SM00409">
    <property type="entry name" value="IG"/>
    <property type="match status" value="1"/>
</dbReference>
<dbReference type="SMART" id="SM00408">
    <property type="entry name" value="IGc2"/>
    <property type="match status" value="1"/>
</dbReference>
<dbReference type="SMART" id="SM00369">
    <property type="entry name" value="LRR_TYP"/>
    <property type="match status" value="4"/>
</dbReference>
<dbReference type="SMART" id="SM00082">
    <property type="entry name" value="LRRCT"/>
    <property type="match status" value="1"/>
</dbReference>
<dbReference type="SUPFAM" id="SSF48726">
    <property type="entry name" value="Immunoglobulin"/>
    <property type="match status" value="1"/>
</dbReference>
<dbReference type="SUPFAM" id="SSF52058">
    <property type="entry name" value="L domain-like"/>
    <property type="match status" value="1"/>
</dbReference>
<dbReference type="PROSITE" id="PS50835">
    <property type="entry name" value="IG_LIKE"/>
    <property type="match status" value="1"/>
</dbReference>
<dbReference type="PROSITE" id="PS51450">
    <property type="entry name" value="LRR"/>
    <property type="match status" value="4"/>
</dbReference>
<feature type="signal peptide" evidence="2">
    <location>
        <begin position="1"/>
        <end position="19"/>
    </location>
</feature>
<feature type="chain" id="PRO_0000309344" description="Leucine-rich repeat, immunoglobulin-like domain and transmembrane domain-containing protein 2">
    <location>
        <begin position="20"/>
        <end position="550"/>
    </location>
</feature>
<feature type="transmembrane region" description="Helical" evidence="2">
    <location>
        <begin position="466"/>
        <end position="486"/>
    </location>
</feature>
<feature type="domain" description="LRRNT">
    <location>
        <begin position="23"/>
        <end position="54"/>
    </location>
</feature>
<feature type="repeat" description="LRR 1">
    <location>
        <begin position="80"/>
        <end position="103"/>
    </location>
</feature>
<feature type="repeat" description="LRR 2">
    <location>
        <begin position="104"/>
        <end position="125"/>
    </location>
</feature>
<feature type="repeat" description="LRR 3">
    <location>
        <begin position="128"/>
        <end position="149"/>
    </location>
</feature>
<feature type="repeat" description="LRR 4">
    <location>
        <begin position="152"/>
        <end position="173"/>
    </location>
</feature>
<feature type="domain" description="LRRCT">
    <location>
        <begin position="200"/>
        <end position="252"/>
    </location>
</feature>
<feature type="domain" description="Ig-like">
    <location>
        <begin position="253"/>
        <end position="341"/>
    </location>
</feature>
<feature type="domain" description="Fibronectin type-III">
    <location>
        <begin position="361"/>
        <end position="451"/>
    </location>
</feature>
<feature type="region of interest" description="Disordered" evidence="4">
    <location>
        <begin position="508"/>
        <end position="550"/>
    </location>
</feature>
<feature type="compositionally biased region" description="Basic and acidic residues" evidence="4">
    <location>
        <begin position="519"/>
        <end position="550"/>
    </location>
</feature>
<feature type="glycosylation site" description="N-linked (GlcNAc...) asparagine" evidence="2">
    <location>
        <position position="52"/>
    </location>
</feature>
<feature type="disulfide bond" evidence="3">
    <location>
        <begin position="274"/>
        <end position="327"/>
    </location>
</feature>
<feature type="splice variant" id="VSP_054539" description="In isoform 2." evidence="5">
    <original>D</original>
    <variation>DGLLGGKHLTP</variation>
    <location>
        <position position="297"/>
    </location>
</feature>
<feature type="sequence variant" id="VAR_036935" description="In dbSNP:rs12773843.">
    <original>C</original>
    <variation>Y</variation>
    <location>
        <position position="28"/>
    </location>
</feature>
<feature type="sequence variant" id="VAR_036936" description="In dbSNP:rs11200927.">
    <original>K</original>
    <variation>N</variation>
    <location>
        <position position="179"/>
    </location>
</feature>
<feature type="sequence variant" id="VAR_036937" description="In dbSNP:rs11200925.">
    <original>L</original>
    <variation>F</variation>
    <location>
        <position position="220"/>
    </location>
</feature>
<feature type="sequence variant" id="VAR_036938" description="In dbSNP:rs12217769.">
    <original>V</original>
    <variation>A</variation>
    <location>
        <position position="496"/>
    </location>
</feature>
<feature type="sequence variant" id="VAR_036939" description="In dbSNP:rs6585847.">
    <original>T</original>
    <variation>P</variation>
    <location>
        <position position="510"/>
    </location>
</feature>
<gene>
    <name type="primary">LRIT2</name>
    <name type="synonym">LRRC22</name>
</gene>
<proteinExistence type="evidence at protein level"/>
<organism>
    <name type="scientific">Homo sapiens</name>
    <name type="common">Human</name>
    <dbReference type="NCBI Taxonomy" id="9606"/>
    <lineage>
        <taxon>Eukaryota</taxon>
        <taxon>Metazoa</taxon>
        <taxon>Chordata</taxon>
        <taxon>Craniata</taxon>
        <taxon>Vertebrata</taxon>
        <taxon>Euteleostomi</taxon>
        <taxon>Mammalia</taxon>
        <taxon>Eutheria</taxon>
        <taxon>Euarchontoglires</taxon>
        <taxon>Primates</taxon>
        <taxon>Haplorrhini</taxon>
        <taxon>Catarrhini</taxon>
        <taxon>Hominidae</taxon>
        <taxon>Homo</taxon>
    </lineage>
</organism>
<name>LRIT2_HUMAN</name>
<reference key="1">
    <citation type="journal article" date="2007" name="BMC Genomics">
        <title>The full-ORF clone resource of the German cDNA consortium.</title>
        <authorList>
            <person name="Bechtel S."/>
            <person name="Rosenfelder H."/>
            <person name="Duda A."/>
            <person name="Schmidt C.P."/>
            <person name="Ernst U."/>
            <person name="Wellenreuther R."/>
            <person name="Mehrle A."/>
            <person name="Schuster C."/>
            <person name="Bahr A."/>
            <person name="Bloecker H."/>
            <person name="Heubner D."/>
            <person name="Hoerlein A."/>
            <person name="Michel G."/>
            <person name="Wedler H."/>
            <person name="Koehrer K."/>
            <person name="Ottenwaelder B."/>
            <person name="Poustka A."/>
            <person name="Wiemann S."/>
            <person name="Schupp I."/>
        </authorList>
    </citation>
    <scope>NUCLEOTIDE SEQUENCE [LARGE SCALE MRNA] (ISOFORM 1)</scope>
    <source>
        <tissue>Retina</tissue>
    </source>
</reference>
<reference key="2">
    <citation type="journal article" date="2004" name="Nature">
        <title>The DNA sequence and comparative analysis of human chromosome 10.</title>
        <authorList>
            <person name="Deloukas P."/>
            <person name="Earthrowl M.E."/>
            <person name="Grafham D.V."/>
            <person name="Rubenfield M."/>
            <person name="French L."/>
            <person name="Steward C.A."/>
            <person name="Sims S.K."/>
            <person name="Jones M.C."/>
            <person name="Searle S."/>
            <person name="Scott C."/>
            <person name="Howe K."/>
            <person name="Hunt S.E."/>
            <person name="Andrews T.D."/>
            <person name="Gilbert J.G.R."/>
            <person name="Swarbreck D."/>
            <person name="Ashurst J.L."/>
            <person name="Taylor A."/>
            <person name="Battles J."/>
            <person name="Bird C.P."/>
            <person name="Ainscough R."/>
            <person name="Almeida J.P."/>
            <person name="Ashwell R.I.S."/>
            <person name="Ambrose K.D."/>
            <person name="Babbage A.K."/>
            <person name="Bagguley C.L."/>
            <person name="Bailey J."/>
            <person name="Banerjee R."/>
            <person name="Bates K."/>
            <person name="Beasley H."/>
            <person name="Bray-Allen S."/>
            <person name="Brown A.J."/>
            <person name="Brown J.Y."/>
            <person name="Burford D.C."/>
            <person name="Burrill W."/>
            <person name="Burton J."/>
            <person name="Cahill P."/>
            <person name="Camire D."/>
            <person name="Carter N.P."/>
            <person name="Chapman J.C."/>
            <person name="Clark S.Y."/>
            <person name="Clarke G."/>
            <person name="Clee C.M."/>
            <person name="Clegg S."/>
            <person name="Corby N."/>
            <person name="Coulson A."/>
            <person name="Dhami P."/>
            <person name="Dutta I."/>
            <person name="Dunn M."/>
            <person name="Faulkner L."/>
            <person name="Frankish A."/>
            <person name="Frankland J.A."/>
            <person name="Garner P."/>
            <person name="Garnett J."/>
            <person name="Gribble S."/>
            <person name="Griffiths C."/>
            <person name="Grocock R."/>
            <person name="Gustafson E."/>
            <person name="Hammond S."/>
            <person name="Harley J.L."/>
            <person name="Hart E."/>
            <person name="Heath P.D."/>
            <person name="Ho T.P."/>
            <person name="Hopkins B."/>
            <person name="Horne J."/>
            <person name="Howden P.J."/>
            <person name="Huckle E."/>
            <person name="Hynds C."/>
            <person name="Johnson C."/>
            <person name="Johnson D."/>
            <person name="Kana A."/>
            <person name="Kay M."/>
            <person name="Kimberley A.M."/>
            <person name="Kershaw J.K."/>
            <person name="Kokkinaki M."/>
            <person name="Laird G.K."/>
            <person name="Lawlor S."/>
            <person name="Lee H.M."/>
            <person name="Leongamornlert D.A."/>
            <person name="Laird G."/>
            <person name="Lloyd C."/>
            <person name="Lloyd D.M."/>
            <person name="Loveland J."/>
            <person name="Lovell J."/>
            <person name="McLaren S."/>
            <person name="McLay K.E."/>
            <person name="McMurray A."/>
            <person name="Mashreghi-Mohammadi M."/>
            <person name="Matthews L."/>
            <person name="Milne S."/>
            <person name="Nickerson T."/>
            <person name="Nguyen M."/>
            <person name="Overton-Larty E."/>
            <person name="Palmer S.A."/>
            <person name="Pearce A.V."/>
            <person name="Peck A.I."/>
            <person name="Pelan S."/>
            <person name="Phillimore B."/>
            <person name="Porter K."/>
            <person name="Rice C.M."/>
            <person name="Rogosin A."/>
            <person name="Ross M.T."/>
            <person name="Sarafidou T."/>
            <person name="Sehra H.K."/>
            <person name="Shownkeen R."/>
            <person name="Skuce C.D."/>
            <person name="Smith M."/>
            <person name="Standring L."/>
            <person name="Sycamore N."/>
            <person name="Tester J."/>
            <person name="Thorpe A."/>
            <person name="Torcasso W."/>
            <person name="Tracey A."/>
            <person name="Tromans A."/>
            <person name="Tsolas J."/>
            <person name="Wall M."/>
            <person name="Walsh J."/>
            <person name="Wang H."/>
            <person name="Weinstock K."/>
            <person name="West A.P."/>
            <person name="Willey D.L."/>
            <person name="Whitehead S.L."/>
            <person name="Wilming L."/>
            <person name="Wray P.W."/>
            <person name="Young L."/>
            <person name="Chen Y."/>
            <person name="Lovering R.C."/>
            <person name="Moschonas N.K."/>
            <person name="Siebert R."/>
            <person name="Fechtel K."/>
            <person name="Bentley D."/>
            <person name="Durbin R.M."/>
            <person name="Hubbard T."/>
            <person name="Doucette-Stamm L."/>
            <person name="Beck S."/>
            <person name="Smith D.R."/>
            <person name="Rogers J."/>
        </authorList>
    </citation>
    <scope>NUCLEOTIDE SEQUENCE [LARGE SCALE GENOMIC DNA]</scope>
</reference>
<reference key="3">
    <citation type="journal article" date="2004" name="Genome Res.">
        <title>The status, quality, and expansion of the NIH full-length cDNA project: the Mammalian Gene Collection (MGC).</title>
        <authorList>
            <consortium name="The MGC Project Team"/>
        </authorList>
    </citation>
    <scope>NUCLEOTIDE SEQUENCE [LARGE SCALE MRNA] (ISOFORM 2)</scope>
</reference>
<evidence type="ECO:0000250" key="1">
    <source>
        <dbReference type="UniProtKB" id="Q6PFC5"/>
    </source>
</evidence>
<evidence type="ECO:0000255" key="2"/>
<evidence type="ECO:0000255" key="3">
    <source>
        <dbReference type="PROSITE-ProRule" id="PRU00114"/>
    </source>
</evidence>
<evidence type="ECO:0000256" key="4">
    <source>
        <dbReference type="SAM" id="MobiDB-lite"/>
    </source>
</evidence>
<evidence type="ECO:0000303" key="5">
    <source>
    </source>
</evidence>
<comment type="subunit">
    <text evidence="1">Interacts with LRIT1; may form a heterodimer with LRIT1.</text>
</comment>
<comment type="subcellular location">
    <subcellularLocation>
        <location>Membrane</location>
        <topology>Single-pass type I membrane protein</topology>
    </subcellularLocation>
</comment>
<comment type="alternative products">
    <event type="alternative splicing"/>
    <isoform>
        <id>A6NDA9-1</id>
        <name>1</name>
        <sequence type="displayed"/>
    </isoform>
    <isoform>
        <id>A6NDA9-2</id>
        <name>2</name>
        <sequence type="described" ref="VSP_054539"/>
    </isoform>
</comment>
<sequence>MASVFHYFLLVLVFLDTHAAQPFCLPGCTCSEESFGRTLQCTSVSLGKIPGNLSEEFKQVRIENSPLFEMPQGSFINMSTLEYLWLNFNNISVIHLGALEHLPELRELRLEGNKLCSVPWTAFRATPLLRVLDLKRNKIDALPELALQFLVSLTYLDLSSNRLTVVSKSVFLNWPAYQKCRQPDCGAEILSSLVVALHDNPWVCDCRLRGLVQFVKSITLPVILVNSYLICQGPLSKAGQLFHETELSACMKPQISTPSANITIRAGQNVTLRCLAQASPSPSIAWTYPLSMWREFDVLTSSTGEDTALSELAIPAAHLVDSGNYTCMASNSIGKSNLVISLHVQPAQALHAPDSLSIPSEGNAYIDLRVVKQTVHGILLEWLAVADTSKEEWFTLYIASDEAFRKEVVHIGPGINTYAVDDLLPGTKYEACLSLEGQPPHQGQCVAFVTGRDAGGLEAREHLLHVTVVLCVVLLAVPVGAYAWAAQGPCSCSKWVLRGCLHRRKAPSCTPAAPQSKDGSFREHPAVCDDGEGHIDTEGDKEKGGTEDNS</sequence>
<protein>
    <recommendedName>
        <fullName>Leucine-rich repeat, immunoglobulin-like domain and transmembrane domain-containing protein 2</fullName>
    </recommendedName>
    <alternativeName>
        <fullName>Leucine-rich repeat-containing protein 22</fullName>
    </alternativeName>
</protein>
<keyword id="KW-0025">Alternative splicing</keyword>
<keyword id="KW-1015">Disulfide bond</keyword>
<keyword id="KW-0325">Glycoprotein</keyword>
<keyword id="KW-0393">Immunoglobulin domain</keyword>
<keyword id="KW-0433">Leucine-rich repeat</keyword>
<keyword id="KW-0472">Membrane</keyword>
<keyword id="KW-1267">Proteomics identification</keyword>
<keyword id="KW-1185">Reference proteome</keyword>
<keyword id="KW-0677">Repeat</keyword>
<keyword id="KW-0732">Signal</keyword>
<keyword id="KW-0812">Transmembrane</keyword>
<keyword id="KW-1133">Transmembrane helix</keyword>
<accession>A6NDA9</accession>
<accession>B7ZME6</accession>